<name>SPAT_BACIU</name>
<feature type="chain" id="PRO_0000092974" description="Subtilin transport ATP-binding protein SpaT">
    <location>
        <begin position="1"/>
        <end position="614"/>
    </location>
</feature>
<feature type="transmembrane region" description="Helical" evidence="2">
    <location>
        <begin position="34"/>
        <end position="54"/>
    </location>
</feature>
<feature type="transmembrane region" description="Helical" evidence="2">
    <location>
        <begin position="69"/>
        <end position="89"/>
    </location>
</feature>
<feature type="transmembrane region" description="Helical" evidence="2">
    <location>
        <begin position="147"/>
        <end position="167"/>
    </location>
</feature>
<feature type="transmembrane region" description="Helical" evidence="2">
    <location>
        <begin position="175"/>
        <end position="195"/>
    </location>
</feature>
<feature type="transmembrane region" description="Helical" evidence="2">
    <location>
        <begin position="267"/>
        <end position="287"/>
    </location>
</feature>
<feature type="domain" description="ABC transmembrane type-1" evidence="2">
    <location>
        <begin position="34"/>
        <end position="320"/>
    </location>
</feature>
<feature type="domain" description="ABC transporter" evidence="1">
    <location>
        <begin position="353"/>
        <end position="593"/>
    </location>
</feature>
<feature type="binding site" evidence="1">
    <location>
        <begin position="387"/>
        <end position="394"/>
    </location>
    <ligand>
        <name>ATP</name>
        <dbReference type="ChEBI" id="CHEBI:30616"/>
    </ligand>
</feature>
<feature type="sequence conflict" description="In Ref. 2; AAA22770/AAA22776." evidence="3" ref="2">
    <original>R</original>
    <variation>A</variation>
    <location>
        <position position="39"/>
    </location>
</feature>
<feature type="sequence conflict" description="In Ref. 2; AAA22770/AAA22776." evidence="3" ref="2">
    <original>E</original>
    <variation>D</variation>
    <location>
        <position position="68"/>
    </location>
</feature>
<feature type="sequence conflict" description="In Ref. 2; AAA22770/AAA22776." evidence="3" ref="2">
    <original>K</original>
    <variation>S</variation>
    <location>
        <position position="394"/>
    </location>
</feature>
<feature type="sequence conflict" description="In Ref. 2; AAA22770/AAA22776." evidence="3" ref="2">
    <original>HE</original>
    <variation>QQ</variation>
    <location>
        <begin position="407"/>
        <end position="408"/>
    </location>
</feature>
<evidence type="ECO:0000255" key="1">
    <source>
        <dbReference type="PROSITE-ProRule" id="PRU00434"/>
    </source>
</evidence>
<evidence type="ECO:0000255" key="2">
    <source>
        <dbReference type="PROSITE-ProRule" id="PRU00441"/>
    </source>
</evidence>
<evidence type="ECO:0000305" key="3"/>
<organism>
    <name type="scientific">Bacillus subtilis</name>
    <dbReference type="NCBI Taxonomy" id="1423"/>
    <lineage>
        <taxon>Bacteria</taxon>
        <taxon>Bacillati</taxon>
        <taxon>Bacillota</taxon>
        <taxon>Bacilli</taxon>
        <taxon>Bacillales</taxon>
        <taxon>Bacillaceae</taxon>
        <taxon>Bacillus</taxon>
    </lineage>
</organism>
<dbReference type="EMBL" id="M86869">
    <property type="protein sequence ID" value="AAA22838.1"/>
    <property type="molecule type" value="Genomic_DNA"/>
</dbReference>
<dbReference type="EMBL" id="M83944">
    <property type="protein sequence ID" value="AAA22770.1"/>
    <property type="status" value="ALT_INIT"/>
    <property type="molecule type" value="Genomic_DNA"/>
</dbReference>
<dbReference type="EMBL" id="M99263">
    <property type="protein sequence ID" value="AAA22776.1"/>
    <property type="status" value="ALT_INIT"/>
    <property type="molecule type" value="Genomic_DNA"/>
</dbReference>
<dbReference type="EMBL" id="U09819">
    <property type="protein sequence ID" value="AAB91587.1"/>
    <property type="molecule type" value="Genomic_DNA"/>
</dbReference>
<dbReference type="PIR" id="B43935">
    <property type="entry name" value="B43935"/>
</dbReference>
<dbReference type="SMR" id="P33116"/>
<dbReference type="TCDB" id="3.A.1.111.2">
    <property type="family name" value="the atp-binding cassette (abc) superfamily"/>
</dbReference>
<dbReference type="GO" id="GO:0005886">
    <property type="term" value="C:plasma membrane"/>
    <property type="evidence" value="ECO:0007669"/>
    <property type="project" value="UniProtKB-SubCell"/>
</dbReference>
<dbReference type="GO" id="GO:0140359">
    <property type="term" value="F:ABC-type transporter activity"/>
    <property type="evidence" value="ECO:0007669"/>
    <property type="project" value="InterPro"/>
</dbReference>
<dbReference type="GO" id="GO:0005524">
    <property type="term" value="F:ATP binding"/>
    <property type="evidence" value="ECO:0007669"/>
    <property type="project" value="UniProtKB-KW"/>
</dbReference>
<dbReference type="GO" id="GO:0016887">
    <property type="term" value="F:ATP hydrolysis activity"/>
    <property type="evidence" value="ECO:0007669"/>
    <property type="project" value="InterPro"/>
</dbReference>
<dbReference type="GO" id="GO:0034040">
    <property type="term" value="F:ATPase-coupled lipid transmembrane transporter activity"/>
    <property type="evidence" value="ECO:0007669"/>
    <property type="project" value="TreeGrafter"/>
</dbReference>
<dbReference type="GO" id="GO:0043213">
    <property type="term" value="P:bacteriocin transport"/>
    <property type="evidence" value="ECO:0007669"/>
    <property type="project" value="UniProtKB-KW"/>
</dbReference>
<dbReference type="GO" id="GO:0015031">
    <property type="term" value="P:protein transport"/>
    <property type="evidence" value="ECO:0007669"/>
    <property type="project" value="UniProtKB-KW"/>
</dbReference>
<dbReference type="CDD" id="cd03228">
    <property type="entry name" value="ABCC_MRP_Like"/>
    <property type="match status" value="1"/>
</dbReference>
<dbReference type="Gene3D" id="1.20.1560.10">
    <property type="entry name" value="ABC transporter type 1, transmembrane domain"/>
    <property type="match status" value="1"/>
</dbReference>
<dbReference type="Gene3D" id="3.40.50.300">
    <property type="entry name" value="P-loop containing nucleotide triphosphate hydrolases"/>
    <property type="match status" value="1"/>
</dbReference>
<dbReference type="InterPro" id="IPR003593">
    <property type="entry name" value="AAA+_ATPase"/>
</dbReference>
<dbReference type="InterPro" id="IPR011527">
    <property type="entry name" value="ABC1_TM_dom"/>
</dbReference>
<dbReference type="InterPro" id="IPR036640">
    <property type="entry name" value="ABC1_TM_sf"/>
</dbReference>
<dbReference type="InterPro" id="IPR003439">
    <property type="entry name" value="ABC_transporter-like_ATP-bd"/>
</dbReference>
<dbReference type="InterPro" id="IPR017871">
    <property type="entry name" value="ABC_transporter-like_CS"/>
</dbReference>
<dbReference type="InterPro" id="IPR027417">
    <property type="entry name" value="P-loop_NTPase"/>
</dbReference>
<dbReference type="InterPro" id="IPR039421">
    <property type="entry name" value="Type_1_exporter"/>
</dbReference>
<dbReference type="PANTHER" id="PTHR24221">
    <property type="entry name" value="ATP-BINDING CASSETTE SUB-FAMILY B"/>
    <property type="match status" value="1"/>
</dbReference>
<dbReference type="PANTHER" id="PTHR24221:SF654">
    <property type="entry name" value="ATP-BINDING CASSETTE SUB-FAMILY B MEMBER 6"/>
    <property type="match status" value="1"/>
</dbReference>
<dbReference type="Pfam" id="PF00005">
    <property type="entry name" value="ABC_tran"/>
    <property type="match status" value="1"/>
</dbReference>
<dbReference type="SMART" id="SM00382">
    <property type="entry name" value="AAA"/>
    <property type="match status" value="1"/>
</dbReference>
<dbReference type="SUPFAM" id="SSF90123">
    <property type="entry name" value="ABC transporter transmembrane region"/>
    <property type="match status" value="1"/>
</dbReference>
<dbReference type="SUPFAM" id="SSF52540">
    <property type="entry name" value="P-loop containing nucleoside triphosphate hydrolases"/>
    <property type="match status" value="1"/>
</dbReference>
<dbReference type="PROSITE" id="PS50929">
    <property type="entry name" value="ABC_TM1F"/>
    <property type="match status" value="1"/>
</dbReference>
<dbReference type="PROSITE" id="PS00211">
    <property type="entry name" value="ABC_TRANSPORTER_1"/>
    <property type="match status" value="1"/>
</dbReference>
<dbReference type="PROSITE" id="PS50893">
    <property type="entry name" value="ABC_TRANSPORTER_2"/>
    <property type="match status" value="1"/>
</dbReference>
<reference key="1">
    <citation type="journal article" date="1992" name="Appl. Environ. Microbiol.">
        <title>Analysis of genes involved in biosynthesis of the lantibiotic subtilin.</title>
        <authorList>
            <person name="Klein C."/>
            <person name="Kaletta C."/>
            <person name="Schnell N."/>
            <person name="Entian K.-D."/>
        </authorList>
    </citation>
    <scope>NUCLEOTIDE SEQUENCE [GENOMIC DNA]</scope>
    <source>
        <strain>ATCC 6633 / PCI 219 / NRS 231</strain>
    </source>
</reference>
<reference key="2">
    <citation type="journal article" date="1992" name="J. Bacteriol.">
        <title>The subtilin gene of Bacillus subtilis ATCC 6633 is encoded in an operon that contains a homolog of the hemolysin B transport protein.</title>
        <authorList>
            <person name="Chung Y.J."/>
            <person name="Steen M.T."/>
            <person name="Hansen J.N."/>
        </authorList>
    </citation>
    <scope>NUCLEOTIDE SEQUENCE [GENOMIC DNA]</scope>
    <source>
        <strain>ATCC 6633 / PCI 219 / NRS 231</strain>
    </source>
</reference>
<accession>P33116</accession>
<comment type="function">
    <text>Probably implicated in the export process of the lantibiotic subtilin.</text>
</comment>
<comment type="subcellular location">
    <subcellularLocation>
        <location>Cell membrane</location>
        <topology>Multi-pass membrane protein</topology>
    </subcellularLocation>
</comment>
<comment type="similarity">
    <text evidence="3">Belongs to the ABC transporter superfamily.</text>
</comment>
<comment type="sequence caution" evidence="3">
    <conflict type="erroneous initiation">
        <sequence resource="EMBL-CDS" id="AAA22770"/>
    </conflict>
</comment>
<comment type="sequence caution" evidence="3">
    <conflict type="erroneous initiation">
        <sequence resource="EMBL-CDS" id="AAA22776"/>
    </conflict>
</comment>
<gene>
    <name type="primary">spaT</name>
    <name type="synonym">spaB</name>
    <name type="synonym">spaY</name>
</gene>
<proteinExistence type="inferred from homology"/>
<keyword id="KW-0067">ATP-binding</keyword>
<keyword id="KW-0080">Bacteriocin transport</keyword>
<keyword id="KW-1003">Cell membrane</keyword>
<keyword id="KW-0472">Membrane</keyword>
<keyword id="KW-0547">Nucleotide-binding</keyword>
<keyword id="KW-0653">Protein transport</keyword>
<keyword id="KW-0812">Transmembrane</keyword>
<keyword id="KW-1133">Transmembrane helix</keyword>
<keyword id="KW-0813">Transport</keyword>
<sequence>MEVKEQLKLKELLFIMKQMPKTFKLIFTLERSLFLKLIRFSIITGILPIVSLYISQELINSLVTIRKEVSIVITIFLTYLGVSFFSELISQISEFYNGKFQLNIGYKLNYKVMKKSSNLALKDFENPEIYDKLERVTKEISYKPYQIIQAIITMTTSFVTLLSSIAFLMSWNPKVSLLLLVIPVISLFYFLKIGQEEFFIHWKRAGKERKSWYISYILTHDFSFKELKLYNLKDYLLNKYWDIKKSFIEQDTKILRKKTLLNLIYEIAVQLVGAVIIFIAIMSAFAGKIMVGNVMSYIRSVSLVQNHSQSIMTSIYSIYNSNLYMNQLYEFLELKEEKSQGHKKPIVEPIHSVVFQNVSFIYPNQGEQTLKHINVSLHKGERVAIVGPNGSGKKTFIKLLTGLYEVHEGDILINGINIKELDMDSYMNQIAALFQDFMKYEMTLKENIGFGQIDKLHQTNKMHEVLDIVRADFLKSHSSYQFDTQLGLWFDEGRQLSGGQWQKIALARAYFREASLYILDEPSSALDPIAEKETFDTFFSLSKDKIGIFISHRLVAAKLADRIIVMDKGEIVGIGTHEELLKTCPLYKKMDESENYMNPLEEEGSKWKEALYQG</sequence>
<protein>
    <recommendedName>
        <fullName>Subtilin transport ATP-binding protein SpaT</fullName>
    </recommendedName>
</protein>